<organism>
    <name type="scientific">Paracidovorax citrulli (strain AAC00-1)</name>
    <name type="common">Acidovorax citrulli</name>
    <dbReference type="NCBI Taxonomy" id="397945"/>
    <lineage>
        <taxon>Bacteria</taxon>
        <taxon>Pseudomonadati</taxon>
        <taxon>Pseudomonadota</taxon>
        <taxon>Betaproteobacteria</taxon>
        <taxon>Burkholderiales</taxon>
        <taxon>Comamonadaceae</taxon>
        <taxon>Paracidovorax</taxon>
    </lineage>
</organism>
<reference key="1">
    <citation type="submission" date="2006-12" db="EMBL/GenBank/DDBJ databases">
        <title>Complete sequence of Acidovorax avenae subsp. citrulli AAC00-1.</title>
        <authorList>
            <person name="Copeland A."/>
            <person name="Lucas S."/>
            <person name="Lapidus A."/>
            <person name="Barry K."/>
            <person name="Detter J.C."/>
            <person name="Glavina del Rio T."/>
            <person name="Dalin E."/>
            <person name="Tice H."/>
            <person name="Pitluck S."/>
            <person name="Kiss H."/>
            <person name="Brettin T."/>
            <person name="Bruce D."/>
            <person name="Han C."/>
            <person name="Tapia R."/>
            <person name="Gilna P."/>
            <person name="Schmutz J."/>
            <person name="Larimer F."/>
            <person name="Land M."/>
            <person name="Hauser L."/>
            <person name="Kyrpides N."/>
            <person name="Kim E."/>
            <person name="Stahl D."/>
            <person name="Richardson P."/>
        </authorList>
    </citation>
    <scope>NUCLEOTIDE SEQUENCE [LARGE SCALE GENOMIC DNA]</scope>
    <source>
        <strain>AAC00-1</strain>
    </source>
</reference>
<comment type="function">
    <text evidence="1">ATP-dependent specificity component of the Clp protease. It directs the protease to specific substrates. Can perform chaperone functions in the absence of ClpP.</text>
</comment>
<comment type="subunit">
    <text evidence="1">Component of the ClpX-ClpP complex. Forms a hexameric ring that, in the presence of ATP, binds to fourteen ClpP subunits assembled into a disk-like structure with a central cavity, resembling the structure of eukaryotic proteasomes.</text>
</comment>
<comment type="similarity">
    <text evidence="1">Belongs to the ClpX chaperone family.</text>
</comment>
<name>CLPX_PARC0</name>
<evidence type="ECO:0000255" key="1">
    <source>
        <dbReference type="HAMAP-Rule" id="MF_00175"/>
    </source>
</evidence>
<evidence type="ECO:0000255" key="2">
    <source>
        <dbReference type="PROSITE-ProRule" id="PRU01250"/>
    </source>
</evidence>
<dbReference type="EMBL" id="CP000512">
    <property type="protein sequence ID" value="ABM32049.1"/>
    <property type="molecule type" value="Genomic_DNA"/>
</dbReference>
<dbReference type="RefSeq" id="WP_011794599.1">
    <property type="nucleotide sequence ID" value="NC_008752.1"/>
</dbReference>
<dbReference type="SMR" id="A1TM61"/>
<dbReference type="STRING" id="397945.Aave_1458"/>
<dbReference type="GeneID" id="79791130"/>
<dbReference type="KEGG" id="aav:Aave_1458"/>
<dbReference type="eggNOG" id="COG1219">
    <property type="taxonomic scope" value="Bacteria"/>
</dbReference>
<dbReference type="HOGENOM" id="CLU_014218_8_2_4"/>
<dbReference type="OrthoDB" id="9804062at2"/>
<dbReference type="Proteomes" id="UP000002596">
    <property type="component" value="Chromosome"/>
</dbReference>
<dbReference type="GO" id="GO:0009376">
    <property type="term" value="C:HslUV protease complex"/>
    <property type="evidence" value="ECO:0007669"/>
    <property type="project" value="TreeGrafter"/>
</dbReference>
<dbReference type="GO" id="GO:0005524">
    <property type="term" value="F:ATP binding"/>
    <property type="evidence" value="ECO:0007669"/>
    <property type="project" value="UniProtKB-UniRule"/>
</dbReference>
<dbReference type="GO" id="GO:0016887">
    <property type="term" value="F:ATP hydrolysis activity"/>
    <property type="evidence" value="ECO:0007669"/>
    <property type="project" value="InterPro"/>
</dbReference>
<dbReference type="GO" id="GO:0140662">
    <property type="term" value="F:ATP-dependent protein folding chaperone"/>
    <property type="evidence" value="ECO:0007669"/>
    <property type="project" value="InterPro"/>
</dbReference>
<dbReference type="GO" id="GO:0046983">
    <property type="term" value="F:protein dimerization activity"/>
    <property type="evidence" value="ECO:0007669"/>
    <property type="project" value="InterPro"/>
</dbReference>
<dbReference type="GO" id="GO:0051082">
    <property type="term" value="F:unfolded protein binding"/>
    <property type="evidence" value="ECO:0007669"/>
    <property type="project" value="UniProtKB-UniRule"/>
</dbReference>
<dbReference type="GO" id="GO:0008270">
    <property type="term" value="F:zinc ion binding"/>
    <property type="evidence" value="ECO:0007669"/>
    <property type="project" value="InterPro"/>
</dbReference>
<dbReference type="GO" id="GO:0051301">
    <property type="term" value="P:cell division"/>
    <property type="evidence" value="ECO:0007669"/>
    <property type="project" value="TreeGrafter"/>
</dbReference>
<dbReference type="GO" id="GO:0051603">
    <property type="term" value="P:proteolysis involved in protein catabolic process"/>
    <property type="evidence" value="ECO:0007669"/>
    <property type="project" value="TreeGrafter"/>
</dbReference>
<dbReference type="CDD" id="cd19497">
    <property type="entry name" value="RecA-like_ClpX"/>
    <property type="match status" value="1"/>
</dbReference>
<dbReference type="FunFam" id="1.10.8.60:FF:000002">
    <property type="entry name" value="ATP-dependent Clp protease ATP-binding subunit ClpX"/>
    <property type="match status" value="1"/>
</dbReference>
<dbReference type="FunFam" id="3.40.50.300:FF:000005">
    <property type="entry name" value="ATP-dependent Clp protease ATP-binding subunit ClpX"/>
    <property type="match status" value="1"/>
</dbReference>
<dbReference type="Gene3D" id="1.10.8.60">
    <property type="match status" value="1"/>
</dbReference>
<dbReference type="Gene3D" id="6.20.220.10">
    <property type="entry name" value="ClpX chaperone, C4-type zinc finger domain"/>
    <property type="match status" value="1"/>
</dbReference>
<dbReference type="Gene3D" id="3.40.50.300">
    <property type="entry name" value="P-loop containing nucleotide triphosphate hydrolases"/>
    <property type="match status" value="1"/>
</dbReference>
<dbReference type="HAMAP" id="MF_00175">
    <property type="entry name" value="ClpX"/>
    <property type="match status" value="1"/>
</dbReference>
<dbReference type="InterPro" id="IPR003593">
    <property type="entry name" value="AAA+_ATPase"/>
</dbReference>
<dbReference type="InterPro" id="IPR050052">
    <property type="entry name" value="ATP-dep_Clp_protease_ClpX"/>
</dbReference>
<dbReference type="InterPro" id="IPR003959">
    <property type="entry name" value="ATPase_AAA_core"/>
</dbReference>
<dbReference type="InterPro" id="IPR019489">
    <property type="entry name" value="Clp_ATPase_C"/>
</dbReference>
<dbReference type="InterPro" id="IPR004487">
    <property type="entry name" value="Clp_protease_ATP-bd_su_ClpX"/>
</dbReference>
<dbReference type="InterPro" id="IPR046425">
    <property type="entry name" value="ClpX_bact"/>
</dbReference>
<dbReference type="InterPro" id="IPR027417">
    <property type="entry name" value="P-loop_NTPase"/>
</dbReference>
<dbReference type="InterPro" id="IPR010603">
    <property type="entry name" value="Znf_CppX_C4"/>
</dbReference>
<dbReference type="InterPro" id="IPR038366">
    <property type="entry name" value="Znf_CppX_C4_sf"/>
</dbReference>
<dbReference type="NCBIfam" id="TIGR00382">
    <property type="entry name" value="clpX"/>
    <property type="match status" value="1"/>
</dbReference>
<dbReference type="NCBIfam" id="NF003745">
    <property type="entry name" value="PRK05342.1"/>
    <property type="match status" value="1"/>
</dbReference>
<dbReference type="PANTHER" id="PTHR48102:SF7">
    <property type="entry name" value="ATP-DEPENDENT CLP PROTEASE ATP-BINDING SUBUNIT CLPX-LIKE, MITOCHONDRIAL"/>
    <property type="match status" value="1"/>
</dbReference>
<dbReference type="PANTHER" id="PTHR48102">
    <property type="entry name" value="ATP-DEPENDENT CLP PROTEASE ATP-BINDING SUBUNIT CLPX-LIKE, MITOCHONDRIAL-RELATED"/>
    <property type="match status" value="1"/>
</dbReference>
<dbReference type="Pfam" id="PF07724">
    <property type="entry name" value="AAA_2"/>
    <property type="match status" value="1"/>
</dbReference>
<dbReference type="Pfam" id="PF10431">
    <property type="entry name" value="ClpB_D2-small"/>
    <property type="match status" value="1"/>
</dbReference>
<dbReference type="Pfam" id="PF06689">
    <property type="entry name" value="zf-C4_ClpX"/>
    <property type="match status" value="1"/>
</dbReference>
<dbReference type="SMART" id="SM00382">
    <property type="entry name" value="AAA"/>
    <property type="match status" value="1"/>
</dbReference>
<dbReference type="SMART" id="SM01086">
    <property type="entry name" value="ClpB_D2-small"/>
    <property type="match status" value="1"/>
</dbReference>
<dbReference type="SMART" id="SM00994">
    <property type="entry name" value="zf-C4_ClpX"/>
    <property type="match status" value="1"/>
</dbReference>
<dbReference type="SUPFAM" id="SSF57716">
    <property type="entry name" value="Glucocorticoid receptor-like (DNA-binding domain)"/>
    <property type="match status" value="1"/>
</dbReference>
<dbReference type="SUPFAM" id="SSF52540">
    <property type="entry name" value="P-loop containing nucleoside triphosphate hydrolases"/>
    <property type="match status" value="1"/>
</dbReference>
<dbReference type="PROSITE" id="PS51902">
    <property type="entry name" value="CLPX_ZB"/>
    <property type="match status" value="1"/>
</dbReference>
<gene>
    <name evidence="1" type="primary">clpX</name>
    <name type="ordered locus">Aave_1458</name>
</gene>
<proteinExistence type="inferred from homology"/>
<sequence length="421" mass="45985">MAEKKGSSSEKTLYCSFCGKSQHEVKKLIAGPSVFICDECIDLCNEIIRDELPSTEGARDSRGDLPTPSEIKANLDNYVIGQEIAKRTLAVAVYNHYKRLRHKDKAGKDEVELAKSNILLIGPTGSGKTLLAQTLARMLDVPFVMADATTLTEAGYVGEDVENIVQKLLQSCNYEVERAQRGIVYIDEIDKISRKSDNPSITRDVSGEGVQQALLKLIEGTMASVPPQGGRKHPNQDFLQIDTTNILFICGGAFAGLEKVIENRTEASGIGFGAAVKSKKQRSLTEVFTEIEPEDLIKFGLIPELVGRMPVVTALAELSEDALVQILTEPKNALVKQYSKLLAMEGVELEIRPAALKAIARKALARKTGARGLRSILEQSLIGTMFDLPNTSNVEKVVVDESTIEENKAPLLVYREAAKKA</sequence>
<feature type="chain" id="PRO_1000024506" description="ATP-dependent Clp protease ATP-binding subunit ClpX">
    <location>
        <begin position="1"/>
        <end position="421"/>
    </location>
</feature>
<feature type="domain" description="ClpX-type ZB" evidence="2">
    <location>
        <begin position="3"/>
        <end position="56"/>
    </location>
</feature>
<feature type="binding site" evidence="2">
    <location>
        <position position="15"/>
    </location>
    <ligand>
        <name>Zn(2+)</name>
        <dbReference type="ChEBI" id="CHEBI:29105"/>
    </ligand>
</feature>
<feature type="binding site" evidence="2">
    <location>
        <position position="18"/>
    </location>
    <ligand>
        <name>Zn(2+)</name>
        <dbReference type="ChEBI" id="CHEBI:29105"/>
    </ligand>
</feature>
<feature type="binding site" evidence="2">
    <location>
        <position position="37"/>
    </location>
    <ligand>
        <name>Zn(2+)</name>
        <dbReference type="ChEBI" id="CHEBI:29105"/>
    </ligand>
</feature>
<feature type="binding site" evidence="2">
    <location>
        <position position="40"/>
    </location>
    <ligand>
        <name>Zn(2+)</name>
        <dbReference type="ChEBI" id="CHEBI:29105"/>
    </ligand>
</feature>
<feature type="binding site" evidence="1">
    <location>
        <begin position="123"/>
        <end position="130"/>
    </location>
    <ligand>
        <name>ATP</name>
        <dbReference type="ChEBI" id="CHEBI:30616"/>
    </ligand>
</feature>
<accession>A1TM61</accession>
<keyword id="KW-0067">ATP-binding</keyword>
<keyword id="KW-0143">Chaperone</keyword>
<keyword id="KW-0479">Metal-binding</keyword>
<keyword id="KW-0547">Nucleotide-binding</keyword>
<keyword id="KW-0862">Zinc</keyword>
<protein>
    <recommendedName>
        <fullName evidence="1">ATP-dependent Clp protease ATP-binding subunit ClpX</fullName>
    </recommendedName>
</protein>